<gene>
    <name evidence="1" type="primary">rpsC</name>
    <name type="ordered locus">CPF_2708</name>
</gene>
<sequence>MGQKVHPHGLRVGVIKDWDAKWYADKKNFADNLIEDQQIRKFIKKELFSAGIAKIEIERSAKRVKLNIHTAKPGVIIGKGGSGIERLKASLKNIIAEKNVLINIVEVKNAETNAQLMAENIAAQLEKRISFRRAMKQTIQRAMKAGTLGVKTACSGRLGGAEIARTEQYNEGTIPLQTIRADIDYGFAEADTTYGKIGVKVWVYNGEVLPTKKVEKKEEANA</sequence>
<evidence type="ECO:0000255" key="1">
    <source>
        <dbReference type="HAMAP-Rule" id="MF_01309"/>
    </source>
</evidence>
<evidence type="ECO:0000305" key="2"/>
<reference key="1">
    <citation type="journal article" date="2006" name="Genome Res.">
        <title>Skewed genomic variability in strains of the toxigenic bacterial pathogen, Clostridium perfringens.</title>
        <authorList>
            <person name="Myers G.S.A."/>
            <person name="Rasko D.A."/>
            <person name="Cheung J.K."/>
            <person name="Ravel J."/>
            <person name="Seshadri R."/>
            <person name="DeBoy R.T."/>
            <person name="Ren Q."/>
            <person name="Varga J."/>
            <person name="Awad M.M."/>
            <person name="Brinkac L.M."/>
            <person name="Daugherty S.C."/>
            <person name="Haft D.H."/>
            <person name="Dodson R.J."/>
            <person name="Madupu R."/>
            <person name="Nelson W.C."/>
            <person name="Rosovitz M.J."/>
            <person name="Sullivan S.A."/>
            <person name="Khouri H."/>
            <person name="Dimitrov G.I."/>
            <person name="Watkins K.L."/>
            <person name="Mulligan S."/>
            <person name="Benton J."/>
            <person name="Radune D."/>
            <person name="Fisher D.J."/>
            <person name="Atkins H.S."/>
            <person name="Hiscox T."/>
            <person name="Jost B.H."/>
            <person name="Billington S.J."/>
            <person name="Songer J.G."/>
            <person name="McClane B.A."/>
            <person name="Titball R.W."/>
            <person name="Rood J.I."/>
            <person name="Melville S.B."/>
            <person name="Paulsen I.T."/>
        </authorList>
    </citation>
    <scope>NUCLEOTIDE SEQUENCE [LARGE SCALE GENOMIC DNA]</scope>
    <source>
        <strain>ATCC 13124 / DSM 756 / JCM 1290 / NCIMB 6125 / NCTC 8237 / S 107 / Type A</strain>
    </source>
</reference>
<accession>Q0TMQ2</accession>
<dbReference type="EMBL" id="CP000246">
    <property type="protein sequence ID" value="ABG84277.1"/>
    <property type="molecule type" value="Genomic_DNA"/>
</dbReference>
<dbReference type="RefSeq" id="WP_003454406.1">
    <property type="nucleotide sequence ID" value="NC_008261.1"/>
</dbReference>
<dbReference type="SMR" id="Q0TMQ2"/>
<dbReference type="STRING" id="195103.CPF_2708"/>
<dbReference type="PaxDb" id="195103-CPF_2708"/>
<dbReference type="GeneID" id="93001015"/>
<dbReference type="KEGG" id="cpf:CPF_2708"/>
<dbReference type="eggNOG" id="COG0092">
    <property type="taxonomic scope" value="Bacteria"/>
</dbReference>
<dbReference type="HOGENOM" id="CLU_058591_0_2_9"/>
<dbReference type="Proteomes" id="UP000001823">
    <property type="component" value="Chromosome"/>
</dbReference>
<dbReference type="GO" id="GO:0022627">
    <property type="term" value="C:cytosolic small ribosomal subunit"/>
    <property type="evidence" value="ECO:0007669"/>
    <property type="project" value="TreeGrafter"/>
</dbReference>
<dbReference type="GO" id="GO:0003729">
    <property type="term" value="F:mRNA binding"/>
    <property type="evidence" value="ECO:0007669"/>
    <property type="project" value="UniProtKB-UniRule"/>
</dbReference>
<dbReference type="GO" id="GO:0019843">
    <property type="term" value="F:rRNA binding"/>
    <property type="evidence" value="ECO:0007669"/>
    <property type="project" value="UniProtKB-UniRule"/>
</dbReference>
<dbReference type="GO" id="GO:0003735">
    <property type="term" value="F:structural constituent of ribosome"/>
    <property type="evidence" value="ECO:0007669"/>
    <property type="project" value="InterPro"/>
</dbReference>
<dbReference type="GO" id="GO:0006412">
    <property type="term" value="P:translation"/>
    <property type="evidence" value="ECO:0007669"/>
    <property type="project" value="UniProtKB-UniRule"/>
</dbReference>
<dbReference type="CDD" id="cd02412">
    <property type="entry name" value="KH-II_30S_S3"/>
    <property type="match status" value="1"/>
</dbReference>
<dbReference type="FunFam" id="3.30.300.20:FF:000001">
    <property type="entry name" value="30S ribosomal protein S3"/>
    <property type="match status" value="1"/>
</dbReference>
<dbReference type="Gene3D" id="3.30.300.20">
    <property type="match status" value="1"/>
</dbReference>
<dbReference type="Gene3D" id="3.30.1140.32">
    <property type="entry name" value="Ribosomal protein S3, C-terminal domain"/>
    <property type="match status" value="1"/>
</dbReference>
<dbReference type="HAMAP" id="MF_01309_B">
    <property type="entry name" value="Ribosomal_uS3_B"/>
    <property type="match status" value="1"/>
</dbReference>
<dbReference type="InterPro" id="IPR004087">
    <property type="entry name" value="KH_dom"/>
</dbReference>
<dbReference type="InterPro" id="IPR015946">
    <property type="entry name" value="KH_dom-like_a/b"/>
</dbReference>
<dbReference type="InterPro" id="IPR004044">
    <property type="entry name" value="KH_dom_type_2"/>
</dbReference>
<dbReference type="InterPro" id="IPR009019">
    <property type="entry name" value="KH_sf_prok-type"/>
</dbReference>
<dbReference type="InterPro" id="IPR036419">
    <property type="entry name" value="Ribosomal_S3_C_sf"/>
</dbReference>
<dbReference type="InterPro" id="IPR005704">
    <property type="entry name" value="Ribosomal_uS3_bac-typ"/>
</dbReference>
<dbReference type="InterPro" id="IPR001351">
    <property type="entry name" value="Ribosomal_uS3_C"/>
</dbReference>
<dbReference type="InterPro" id="IPR018280">
    <property type="entry name" value="Ribosomal_uS3_CS"/>
</dbReference>
<dbReference type="NCBIfam" id="TIGR01009">
    <property type="entry name" value="rpsC_bact"/>
    <property type="match status" value="1"/>
</dbReference>
<dbReference type="PANTHER" id="PTHR11760">
    <property type="entry name" value="30S/40S RIBOSOMAL PROTEIN S3"/>
    <property type="match status" value="1"/>
</dbReference>
<dbReference type="PANTHER" id="PTHR11760:SF19">
    <property type="entry name" value="SMALL RIBOSOMAL SUBUNIT PROTEIN US3C"/>
    <property type="match status" value="1"/>
</dbReference>
<dbReference type="Pfam" id="PF07650">
    <property type="entry name" value="KH_2"/>
    <property type="match status" value="1"/>
</dbReference>
<dbReference type="Pfam" id="PF00189">
    <property type="entry name" value="Ribosomal_S3_C"/>
    <property type="match status" value="1"/>
</dbReference>
<dbReference type="SMART" id="SM00322">
    <property type="entry name" value="KH"/>
    <property type="match status" value="1"/>
</dbReference>
<dbReference type="SUPFAM" id="SSF54814">
    <property type="entry name" value="Prokaryotic type KH domain (KH-domain type II)"/>
    <property type="match status" value="1"/>
</dbReference>
<dbReference type="SUPFAM" id="SSF54821">
    <property type="entry name" value="Ribosomal protein S3 C-terminal domain"/>
    <property type="match status" value="1"/>
</dbReference>
<dbReference type="PROSITE" id="PS50823">
    <property type="entry name" value="KH_TYPE_2"/>
    <property type="match status" value="1"/>
</dbReference>
<dbReference type="PROSITE" id="PS00548">
    <property type="entry name" value="RIBOSOMAL_S3"/>
    <property type="match status" value="1"/>
</dbReference>
<proteinExistence type="inferred from homology"/>
<organism>
    <name type="scientific">Clostridium perfringens (strain ATCC 13124 / DSM 756 / JCM 1290 / NCIMB 6125 / NCTC 8237 / Type A)</name>
    <dbReference type="NCBI Taxonomy" id="195103"/>
    <lineage>
        <taxon>Bacteria</taxon>
        <taxon>Bacillati</taxon>
        <taxon>Bacillota</taxon>
        <taxon>Clostridia</taxon>
        <taxon>Eubacteriales</taxon>
        <taxon>Clostridiaceae</taxon>
        <taxon>Clostridium</taxon>
    </lineage>
</organism>
<comment type="function">
    <text evidence="1">Binds the lower part of the 30S subunit head. Binds mRNA in the 70S ribosome, positioning it for translation.</text>
</comment>
<comment type="subunit">
    <text evidence="1">Part of the 30S ribosomal subunit. Forms a tight complex with proteins S10 and S14.</text>
</comment>
<comment type="similarity">
    <text evidence="1">Belongs to the universal ribosomal protein uS3 family.</text>
</comment>
<feature type="chain" id="PRO_0000293776" description="Small ribosomal subunit protein uS3">
    <location>
        <begin position="1"/>
        <end position="222"/>
    </location>
</feature>
<feature type="domain" description="KH type-2" evidence="1">
    <location>
        <begin position="39"/>
        <end position="108"/>
    </location>
</feature>
<protein>
    <recommendedName>
        <fullName evidence="1">Small ribosomal subunit protein uS3</fullName>
    </recommendedName>
    <alternativeName>
        <fullName evidence="2">30S ribosomal protein S3</fullName>
    </alternativeName>
</protein>
<name>RS3_CLOP1</name>
<keyword id="KW-0687">Ribonucleoprotein</keyword>
<keyword id="KW-0689">Ribosomal protein</keyword>
<keyword id="KW-0694">RNA-binding</keyword>
<keyword id="KW-0699">rRNA-binding</keyword>